<feature type="chain" id="PRO_0000351922" description="Protein-L-isoaspartate O-methyltransferase">
    <location>
        <begin position="1"/>
        <end position="219"/>
    </location>
</feature>
<feature type="active site" evidence="1">
    <location>
        <position position="67"/>
    </location>
</feature>
<comment type="function">
    <text evidence="1">Catalyzes the methyl esterification of L-isoaspartyl residues in peptides and proteins that result from spontaneous decomposition of normal L-aspartyl and L-asparaginyl residues. It plays a role in the repair and/or degradation of damaged proteins.</text>
</comment>
<comment type="catalytic activity">
    <reaction evidence="1">
        <text>[protein]-L-isoaspartate + S-adenosyl-L-methionine = [protein]-L-isoaspartate alpha-methyl ester + S-adenosyl-L-homocysteine</text>
        <dbReference type="Rhea" id="RHEA:12705"/>
        <dbReference type="Rhea" id="RHEA-COMP:12143"/>
        <dbReference type="Rhea" id="RHEA-COMP:12144"/>
        <dbReference type="ChEBI" id="CHEBI:57856"/>
        <dbReference type="ChEBI" id="CHEBI:59789"/>
        <dbReference type="ChEBI" id="CHEBI:90596"/>
        <dbReference type="ChEBI" id="CHEBI:90598"/>
        <dbReference type="EC" id="2.1.1.77"/>
    </reaction>
</comment>
<comment type="subcellular location">
    <subcellularLocation>
        <location evidence="1">Cytoplasm</location>
    </subcellularLocation>
</comment>
<comment type="similarity">
    <text evidence="1">Belongs to the methyltransferase superfamily. L-isoaspartyl/D-aspartyl protein methyltransferase family.</text>
</comment>
<gene>
    <name evidence="1" type="primary">pcm</name>
    <name type="ordered locus">Rsph17029_1204</name>
</gene>
<reference key="1">
    <citation type="submission" date="2007-02" db="EMBL/GenBank/DDBJ databases">
        <title>Complete sequence of chromosome 1 of Rhodobacter sphaeroides ATCC 17029.</title>
        <authorList>
            <person name="Copeland A."/>
            <person name="Lucas S."/>
            <person name="Lapidus A."/>
            <person name="Barry K."/>
            <person name="Detter J.C."/>
            <person name="Glavina del Rio T."/>
            <person name="Hammon N."/>
            <person name="Israni S."/>
            <person name="Dalin E."/>
            <person name="Tice H."/>
            <person name="Pitluck S."/>
            <person name="Kiss H."/>
            <person name="Brettin T."/>
            <person name="Bruce D."/>
            <person name="Han C."/>
            <person name="Tapia R."/>
            <person name="Gilna P."/>
            <person name="Schmutz J."/>
            <person name="Larimer F."/>
            <person name="Land M."/>
            <person name="Hauser L."/>
            <person name="Kyrpides N."/>
            <person name="Mikhailova N."/>
            <person name="Richardson P."/>
            <person name="Mackenzie C."/>
            <person name="Choudhary M."/>
            <person name="Donohue T.J."/>
            <person name="Kaplan S."/>
        </authorList>
    </citation>
    <scope>NUCLEOTIDE SEQUENCE [LARGE SCALE GENOMIC DNA]</scope>
    <source>
        <strain>ATCC 17029 / ATH 2.4.9</strain>
    </source>
</reference>
<protein>
    <recommendedName>
        <fullName evidence="1">Protein-L-isoaspartate O-methyltransferase</fullName>
        <ecNumber evidence="1">2.1.1.77</ecNumber>
    </recommendedName>
    <alternativeName>
        <fullName evidence="1">L-isoaspartyl protein carboxyl methyltransferase</fullName>
    </alternativeName>
    <alternativeName>
        <fullName evidence="1">Protein L-isoaspartyl methyltransferase</fullName>
    </alternativeName>
    <alternativeName>
        <fullName evidence="1">Protein-beta-aspartate methyltransferase</fullName>
        <shortName evidence="1">PIMT</shortName>
    </alternativeName>
</protein>
<organism>
    <name type="scientific">Cereibacter sphaeroides (strain ATCC 17029 / ATH 2.4.9)</name>
    <name type="common">Rhodobacter sphaeroides</name>
    <dbReference type="NCBI Taxonomy" id="349101"/>
    <lineage>
        <taxon>Bacteria</taxon>
        <taxon>Pseudomonadati</taxon>
        <taxon>Pseudomonadota</taxon>
        <taxon>Alphaproteobacteria</taxon>
        <taxon>Rhodobacterales</taxon>
        <taxon>Paracoccaceae</taxon>
        <taxon>Cereibacter</taxon>
    </lineage>
</organism>
<proteinExistence type="inferred from homology"/>
<keyword id="KW-0963">Cytoplasm</keyword>
<keyword id="KW-0489">Methyltransferase</keyword>
<keyword id="KW-0949">S-adenosyl-L-methionine</keyword>
<keyword id="KW-0808">Transferase</keyword>
<sequence>MTAEADGEDPAERKMRFLFAVRSRGVTDARVLAAMERIDRGAFVRGIFADRAYEDMPLPIACGQTISQPSVVGLMSQALAVNPRDKVLEVGTGSGYQAAVLSQLARRVYTVDRHRRLVREATEVFHRLSLTNITALIADGSFGLPEQAPFDRILVTAAAEDPPGPLLAQLKIGGIMVVPVGQTDAVQNLIKVTRLEQGYDYEELRPVRFVPLVEGIGSD</sequence>
<dbReference type="EC" id="2.1.1.77" evidence="1"/>
<dbReference type="EMBL" id="CP000577">
    <property type="protein sequence ID" value="ABN76314.1"/>
    <property type="molecule type" value="Genomic_DNA"/>
</dbReference>
<dbReference type="RefSeq" id="WP_002719695.1">
    <property type="nucleotide sequence ID" value="NC_009049.1"/>
</dbReference>
<dbReference type="SMR" id="A3PIZ8"/>
<dbReference type="KEGG" id="rsh:Rsph17029_1204"/>
<dbReference type="HOGENOM" id="CLU_055432_2_0_5"/>
<dbReference type="GO" id="GO:0005737">
    <property type="term" value="C:cytoplasm"/>
    <property type="evidence" value="ECO:0007669"/>
    <property type="project" value="UniProtKB-SubCell"/>
</dbReference>
<dbReference type="GO" id="GO:0004719">
    <property type="term" value="F:protein-L-isoaspartate (D-aspartate) O-methyltransferase activity"/>
    <property type="evidence" value="ECO:0007669"/>
    <property type="project" value="UniProtKB-UniRule"/>
</dbReference>
<dbReference type="GO" id="GO:0032259">
    <property type="term" value="P:methylation"/>
    <property type="evidence" value="ECO:0007669"/>
    <property type="project" value="UniProtKB-KW"/>
</dbReference>
<dbReference type="GO" id="GO:0036211">
    <property type="term" value="P:protein modification process"/>
    <property type="evidence" value="ECO:0007669"/>
    <property type="project" value="UniProtKB-UniRule"/>
</dbReference>
<dbReference type="GO" id="GO:0030091">
    <property type="term" value="P:protein repair"/>
    <property type="evidence" value="ECO:0007669"/>
    <property type="project" value="UniProtKB-UniRule"/>
</dbReference>
<dbReference type="CDD" id="cd02440">
    <property type="entry name" value="AdoMet_MTases"/>
    <property type="match status" value="1"/>
</dbReference>
<dbReference type="FunFam" id="3.40.50.150:FF:000010">
    <property type="entry name" value="Protein-L-isoaspartate O-methyltransferase"/>
    <property type="match status" value="1"/>
</dbReference>
<dbReference type="Gene3D" id="3.40.50.150">
    <property type="entry name" value="Vaccinia Virus protein VP39"/>
    <property type="match status" value="1"/>
</dbReference>
<dbReference type="HAMAP" id="MF_00090">
    <property type="entry name" value="PIMT"/>
    <property type="match status" value="1"/>
</dbReference>
<dbReference type="InterPro" id="IPR000682">
    <property type="entry name" value="PCMT"/>
</dbReference>
<dbReference type="InterPro" id="IPR029063">
    <property type="entry name" value="SAM-dependent_MTases_sf"/>
</dbReference>
<dbReference type="NCBIfam" id="TIGR00080">
    <property type="entry name" value="pimt"/>
    <property type="match status" value="1"/>
</dbReference>
<dbReference type="NCBIfam" id="NF001453">
    <property type="entry name" value="PRK00312.1"/>
    <property type="match status" value="1"/>
</dbReference>
<dbReference type="PANTHER" id="PTHR11579">
    <property type="entry name" value="PROTEIN-L-ISOASPARTATE O-METHYLTRANSFERASE"/>
    <property type="match status" value="1"/>
</dbReference>
<dbReference type="PANTHER" id="PTHR11579:SF0">
    <property type="entry name" value="PROTEIN-L-ISOASPARTATE(D-ASPARTATE) O-METHYLTRANSFERASE"/>
    <property type="match status" value="1"/>
</dbReference>
<dbReference type="Pfam" id="PF01135">
    <property type="entry name" value="PCMT"/>
    <property type="match status" value="1"/>
</dbReference>
<dbReference type="SUPFAM" id="SSF53335">
    <property type="entry name" value="S-adenosyl-L-methionine-dependent methyltransferases"/>
    <property type="match status" value="1"/>
</dbReference>
<dbReference type="PROSITE" id="PS01279">
    <property type="entry name" value="PCMT"/>
    <property type="match status" value="1"/>
</dbReference>
<evidence type="ECO:0000255" key="1">
    <source>
        <dbReference type="HAMAP-Rule" id="MF_00090"/>
    </source>
</evidence>
<accession>A3PIZ8</accession>
<name>PIMT_CERS1</name>